<name>FBSB2_ACAM1</name>
<reference key="1">
    <citation type="journal article" date="2008" name="Proc. Natl. Acad. Sci. U.S.A.">
        <title>Niche adaptation and genome expansion in the chlorophyll d-producing cyanobacterium Acaryochloris marina.</title>
        <authorList>
            <person name="Swingley W.D."/>
            <person name="Chen M."/>
            <person name="Cheung P.C."/>
            <person name="Conrad A.L."/>
            <person name="Dejesa L.C."/>
            <person name="Hao J."/>
            <person name="Honchak B.M."/>
            <person name="Karbach L.E."/>
            <person name="Kurdoglu A."/>
            <person name="Lahiri S."/>
            <person name="Mastrian S.D."/>
            <person name="Miyashita H."/>
            <person name="Page L."/>
            <person name="Ramakrishna P."/>
            <person name="Satoh S."/>
            <person name="Sattley W.M."/>
            <person name="Shimada Y."/>
            <person name="Taylor H.L."/>
            <person name="Tomo T."/>
            <person name="Tsuchiya T."/>
            <person name="Wang Z.T."/>
            <person name="Raymond J."/>
            <person name="Mimuro M."/>
            <person name="Blankenship R.E."/>
            <person name="Touchman J.W."/>
        </authorList>
    </citation>
    <scope>NUCLEOTIDE SEQUENCE [LARGE SCALE GENOMIC DNA]</scope>
    <source>
        <strain>MBIC 11017</strain>
    </source>
</reference>
<accession>B0BZF8</accession>
<protein>
    <recommendedName>
        <fullName>D-fructose 1,6-bisphosphatase class 2/sedoheptulose 1,7-bisphosphatase 2</fullName>
        <shortName>FBPase class 2/SBPase 2</shortName>
        <ecNumber>3.1.3.11</ecNumber>
        <ecNumber>3.1.3.37</ecNumber>
    </recommendedName>
</protein>
<proteinExistence type="inferred from homology"/>
<gene>
    <name type="ordered locus">AM1_5758</name>
</gene>
<sequence>MDNVIGLEIIEVVEQAAIASARWMGKGEKDTADHVAVEAMRDRMNKIHMRGRIVIGEGERDDAPMLYIGEELGICTQPDAAQVCNPDELLEIDIAVDPCEGTNLVAYGQNGSMAVLAISEKGGLFAAPDFYMKKLAAPPAAKGKVDINKSATENLQILAQCLDRSIEELVVVVMKRERHNDLIKEIREAGARVALITDGDVSAALSCAFSGTNIHALMGIGAAPEGVISAAAMRALGGHFQGQLIYDPDIVKTGLIGESKESNLARLKEMGISDPDKVYTAEELACGETVLFAACGITPGTLMKGVRFFGGGARTQSLVISTQSKTARFVDTVHMFETPKRPKALQLH</sequence>
<dbReference type="EC" id="3.1.3.11"/>
<dbReference type="EC" id="3.1.3.37"/>
<dbReference type="EMBL" id="CP000828">
    <property type="protein sequence ID" value="ABW30703.1"/>
    <property type="molecule type" value="Genomic_DNA"/>
</dbReference>
<dbReference type="SMR" id="B0BZF8"/>
<dbReference type="STRING" id="329726.AM1_5758"/>
<dbReference type="KEGG" id="amr:AM1_5758"/>
<dbReference type="eggNOG" id="COG1494">
    <property type="taxonomic scope" value="Bacteria"/>
</dbReference>
<dbReference type="HOGENOM" id="CLU_054938_0_0_3"/>
<dbReference type="OrthoDB" id="9779353at2"/>
<dbReference type="UniPathway" id="UPA00116"/>
<dbReference type="Proteomes" id="UP000000268">
    <property type="component" value="Chromosome"/>
</dbReference>
<dbReference type="GO" id="GO:0005829">
    <property type="term" value="C:cytosol"/>
    <property type="evidence" value="ECO:0007669"/>
    <property type="project" value="TreeGrafter"/>
</dbReference>
<dbReference type="GO" id="GO:0042132">
    <property type="term" value="F:fructose 1,6-bisphosphate 1-phosphatase activity"/>
    <property type="evidence" value="ECO:0007669"/>
    <property type="project" value="UniProtKB-EC"/>
</dbReference>
<dbReference type="GO" id="GO:0046872">
    <property type="term" value="F:metal ion binding"/>
    <property type="evidence" value="ECO:0007669"/>
    <property type="project" value="UniProtKB-KW"/>
</dbReference>
<dbReference type="GO" id="GO:0050278">
    <property type="term" value="F:sedoheptulose-bisphosphatase activity"/>
    <property type="evidence" value="ECO:0007669"/>
    <property type="project" value="UniProtKB-EC"/>
</dbReference>
<dbReference type="GO" id="GO:0030388">
    <property type="term" value="P:fructose 1,6-bisphosphate metabolic process"/>
    <property type="evidence" value="ECO:0007669"/>
    <property type="project" value="TreeGrafter"/>
</dbReference>
<dbReference type="GO" id="GO:0006094">
    <property type="term" value="P:gluconeogenesis"/>
    <property type="evidence" value="ECO:0007669"/>
    <property type="project" value="InterPro"/>
</dbReference>
<dbReference type="GO" id="GO:0006071">
    <property type="term" value="P:glycerol metabolic process"/>
    <property type="evidence" value="ECO:0007669"/>
    <property type="project" value="InterPro"/>
</dbReference>
<dbReference type="GO" id="GO:0019253">
    <property type="term" value="P:reductive pentose-phosphate cycle"/>
    <property type="evidence" value="ECO:0007669"/>
    <property type="project" value="UniProtKB-UniPathway"/>
</dbReference>
<dbReference type="CDD" id="cd01516">
    <property type="entry name" value="FBPase_glpX"/>
    <property type="match status" value="1"/>
</dbReference>
<dbReference type="FunFam" id="3.40.190.90:FF:000001">
    <property type="entry name" value="Fructose-1,6-bisphosphatase"/>
    <property type="match status" value="1"/>
</dbReference>
<dbReference type="Gene3D" id="3.40.190.90">
    <property type="match status" value="1"/>
</dbReference>
<dbReference type="Gene3D" id="3.30.540.10">
    <property type="entry name" value="Fructose-1,6-Bisphosphatase, subunit A, domain 1"/>
    <property type="match status" value="1"/>
</dbReference>
<dbReference type="InterPro" id="IPR004464">
    <property type="entry name" value="FBPase_class-2/SBPase"/>
</dbReference>
<dbReference type="NCBIfam" id="TIGR00330">
    <property type="entry name" value="glpX"/>
    <property type="match status" value="1"/>
</dbReference>
<dbReference type="PANTHER" id="PTHR30447:SF0">
    <property type="entry name" value="FRUCTOSE-1,6-BISPHOSPHATASE 1 CLASS 2-RELATED"/>
    <property type="match status" value="1"/>
</dbReference>
<dbReference type="PANTHER" id="PTHR30447">
    <property type="entry name" value="FRUCTOSE-1,6-BISPHOSPHATASE CLASS 2"/>
    <property type="match status" value="1"/>
</dbReference>
<dbReference type="Pfam" id="PF03320">
    <property type="entry name" value="FBPase_glpX"/>
    <property type="match status" value="1"/>
</dbReference>
<dbReference type="PIRSF" id="PIRSF004532">
    <property type="entry name" value="GlpX"/>
    <property type="match status" value="1"/>
</dbReference>
<dbReference type="SUPFAM" id="SSF56655">
    <property type="entry name" value="Carbohydrate phosphatase"/>
    <property type="match status" value="1"/>
</dbReference>
<comment type="function">
    <text evidence="1">Catalyzes the hydrolysis of fructose 1,6-bisphosphate (Fru 1,6-P2) and sedoheptulose 1,7-bisphosphate (Sed 1,7-P2) to fructose 6-phosphate and sedoheptulose 7-phosphate, respectively.</text>
</comment>
<comment type="catalytic activity">
    <reaction>
        <text>beta-D-fructose 1,6-bisphosphate + H2O = beta-D-fructose 6-phosphate + phosphate</text>
        <dbReference type="Rhea" id="RHEA:11064"/>
        <dbReference type="ChEBI" id="CHEBI:15377"/>
        <dbReference type="ChEBI" id="CHEBI:32966"/>
        <dbReference type="ChEBI" id="CHEBI:43474"/>
        <dbReference type="ChEBI" id="CHEBI:57634"/>
        <dbReference type="EC" id="3.1.3.11"/>
    </reaction>
</comment>
<comment type="catalytic activity">
    <reaction>
        <text>D-sedoheptulose 1,7-bisphosphate + H2O = D-sedoheptulose 7-phosphate + phosphate</text>
        <dbReference type="Rhea" id="RHEA:17461"/>
        <dbReference type="ChEBI" id="CHEBI:15377"/>
        <dbReference type="ChEBI" id="CHEBI:43474"/>
        <dbReference type="ChEBI" id="CHEBI:57483"/>
        <dbReference type="ChEBI" id="CHEBI:58335"/>
        <dbReference type="EC" id="3.1.3.37"/>
    </reaction>
</comment>
<comment type="pathway">
    <text>Carbohydrate biosynthesis; Calvin cycle.</text>
</comment>
<comment type="subunit">
    <text evidence="1">Homotetramer.</text>
</comment>
<comment type="similarity">
    <text evidence="2">Belongs to the FBPase class 2 family.</text>
</comment>
<evidence type="ECO:0000250" key="1"/>
<evidence type="ECO:0000305" key="2"/>
<keyword id="KW-0113">Calvin cycle</keyword>
<keyword id="KW-0119">Carbohydrate metabolism</keyword>
<keyword id="KW-0378">Hydrolase</keyword>
<keyword id="KW-0464">Manganese</keyword>
<keyword id="KW-0479">Metal-binding</keyword>
<keyword id="KW-1185">Reference proteome</keyword>
<feature type="chain" id="PRO_0000342707" description="D-fructose 1,6-bisphosphatase class 2/sedoheptulose 1,7-bisphosphatase 2">
    <location>
        <begin position="1"/>
        <end position="348"/>
    </location>
</feature>
<feature type="binding site" evidence="1">
    <location>
        <position position="33"/>
    </location>
    <ligand>
        <name>Mn(2+)</name>
        <dbReference type="ChEBI" id="CHEBI:29035"/>
        <label>1</label>
    </ligand>
</feature>
<feature type="binding site" evidence="1">
    <location>
        <position position="57"/>
    </location>
    <ligand>
        <name>Mn(2+)</name>
        <dbReference type="ChEBI" id="CHEBI:29035"/>
        <label>1</label>
    </ligand>
</feature>
<feature type="binding site" evidence="1">
    <location>
        <position position="97"/>
    </location>
    <ligand>
        <name>Mn(2+)</name>
        <dbReference type="ChEBI" id="CHEBI:29035"/>
        <label>2</label>
    </ligand>
</feature>
<feature type="binding site" evidence="1">
    <location>
        <begin position="100"/>
        <end position="102"/>
    </location>
    <ligand>
        <name>substrate</name>
    </ligand>
</feature>
<feature type="binding site" evidence="1">
    <location>
        <position position="100"/>
    </location>
    <ligand>
        <name>Mn(2+)</name>
        <dbReference type="ChEBI" id="CHEBI:29035"/>
        <label>2</label>
    </ligand>
</feature>
<feature type="binding site" evidence="1">
    <location>
        <position position="131"/>
    </location>
    <ligand>
        <name>substrate</name>
    </ligand>
</feature>
<feature type="binding site" evidence="1">
    <location>
        <begin position="176"/>
        <end position="178"/>
    </location>
    <ligand>
        <name>substrate</name>
    </ligand>
</feature>
<feature type="binding site" evidence="1">
    <location>
        <begin position="198"/>
        <end position="200"/>
    </location>
    <ligand>
        <name>substrate</name>
    </ligand>
</feature>
<feature type="binding site" evidence="1">
    <location>
        <position position="225"/>
    </location>
    <ligand>
        <name>Mn(2+)</name>
        <dbReference type="ChEBI" id="CHEBI:29035"/>
        <label>2</label>
    </ligand>
</feature>
<organism>
    <name type="scientific">Acaryochloris marina (strain MBIC 11017)</name>
    <dbReference type="NCBI Taxonomy" id="329726"/>
    <lineage>
        <taxon>Bacteria</taxon>
        <taxon>Bacillati</taxon>
        <taxon>Cyanobacteriota</taxon>
        <taxon>Cyanophyceae</taxon>
        <taxon>Acaryochloridales</taxon>
        <taxon>Acaryochloridaceae</taxon>
        <taxon>Acaryochloris</taxon>
    </lineage>
</organism>